<proteinExistence type="inferred from homology"/>
<reference key="1">
    <citation type="journal article" date="2004" name="Proc. Natl. Acad. Sci. U.S.A.">
        <title>Genomic plasticity of the causative agent of melioidosis, Burkholderia pseudomallei.</title>
        <authorList>
            <person name="Holden M.T.G."/>
            <person name="Titball R.W."/>
            <person name="Peacock S.J."/>
            <person name="Cerdeno-Tarraga A.-M."/>
            <person name="Atkins T."/>
            <person name="Crossman L.C."/>
            <person name="Pitt T."/>
            <person name="Churcher C."/>
            <person name="Mungall K.L."/>
            <person name="Bentley S.D."/>
            <person name="Sebaihia M."/>
            <person name="Thomson N.R."/>
            <person name="Bason N."/>
            <person name="Beacham I.R."/>
            <person name="Brooks K."/>
            <person name="Brown K.A."/>
            <person name="Brown N.F."/>
            <person name="Challis G.L."/>
            <person name="Cherevach I."/>
            <person name="Chillingworth T."/>
            <person name="Cronin A."/>
            <person name="Crossett B."/>
            <person name="Davis P."/>
            <person name="DeShazer D."/>
            <person name="Feltwell T."/>
            <person name="Fraser A."/>
            <person name="Hance Z."/>
            <person name="Hauser H."/>
            <person name="Holroyd S."/>
            <person name="Jagels K."/>
            <person name="Keith K.E."/>
            <person name="Maddison M."/>
            <person name="Moule S."/>
            <person name="Price C."/>
            <person name="Quail M.A."/>
            <person name="Rabbinowitsch E."/>
            <person name="Rutherford K."/>
            <person name="Sanders M."/>
            <person name="Simmonds M."/>
            <person name="Songsivilai S."/>
            <person name="Stevens K."/>
            <person name="Tumapa S."/>
            <person name="Vesaratchavest M."/>
            <person name="Whitehead S."/>
            <person name="Yeats C."/>
            <person name="Barrell B.G."/>
            <person name="Oyston P.C.F."/>
            <person name="Parkhill J."/>
        </authorList>
    </citation>
    <scope>NUCLEOTIDE SEQUENCE [LARGE SCALE GENOMIC DNA]</scope>
    <source>
        <strain>K96243</strain>
    </source>
</reference>
<organism>
    <name type="scientific">Burkholderia pseudomallei (strain K96243)</name>
    <dbReference type="NCBI Taxonomy" id="272560"/>
    <lineage>
        <taxon>Bacteria</taxon>
        <taxon>Pseudomonadati</taxon>
        <taxon>Pseudomonadota</taxon>
        <taxon>Betaproteobacteria</taxon>
        <taxon>Burkholderiales</taxon>
        <taxon>Burkholderiaceae</taxon>
        <taxon>Burkholderia</taxon>
        <taxon>pseudomallei group</taxon>
    </lineage>
</organism>
<comment type="function">
    <text evidence="1">Responsible for the transport of dicarboxylates such as succinate, fumarate, and malate from the periplasm across the membrane.</text>
</comment>
<comment type="subcellular location">
    <subcellularLocation>
        <location evidence="1">Cell inner membrane</location>
        <topology evidence="1">Multi-pass membrane protein</topology>
    </subcellularLocation>
</comment>
<comment type="similarity">
    <text evidence="1">Belongs to the dicarboxylate/amino acid:cation symporter (DAACS) (TC 2.A.23) family.</text>
</comment>
<evidence type="ECO:0000255" key="1">
    <source>
        <dbReference type="HAMAP-Rule" id="MF_01300"/>
    </source>
</evidence>
<accession>Q63XW5</accession>
<gene>
    <name evidence="1" type="primary">dctA</name>
    <name type="ordered locus">BPSL0425</name>
</gene>
<sequence length="428" mass="45261">MKKPFYKVLYVQVIFAIVVGVILGHYYPSLAVDMKPLGDGFIKLIKMVIGPIIFCTVVTGIAGMQDMKKVGRVGGKALLYFEIVSTCALVLGLAATHILRPGVGFNIDPATLNGKEVASYAAKAHGQSSVDFLMHIIPNTMIDAFAQGEILQILLIALLFGSVLAHLGERGRVVTDFIDGITRVLFGIVHIVTKLAPIGAFGAMAFTIGKYGVGSLVPLLKLIGTFYLTSVVFVLVVLGAIARFTGFSIIRFVGYIKEELLIVLGTSSSEAALPQLMEKLEKAGCSRSVVGLVVPTGYSFNLDGTNIYMTMAVLFIAQATNIELTWMQQLTLLAVAMLTSKGASGVTGAGFITLAATLAVVPTIPLSGMVLILGIDRFMSECRALTNIVGNGVATVVVSAWEKELDRAKLRAALSGNGEAAAGEAARV</sequence>
<feature type="chain" id="PRO_1000067440" description="C4-dicarboxylate transport protein">
    <location>
        <begin position="1"/>
        <end position="428"/>
    </location>
</feature>
<feature type="transmembrane region" description="Helical" evidence="1">
    <location>
        <begin position="8"/>
        <end position="28"/>
    </location>
</feature>
<feature type="transmembrane region" description="Helical" evidence="1">
    <location>
        <begin position="44"/>
        <end position="64"/>
    </location>
</feature>
<feature type="transmembrane region" description="Helical" evidence="1">
    <location>
        <begin position="78"/>
        <end position="98"/>
    </location>
</feature>
<feature type="transmembrane region" description="Helical" evidence="1">
    <location>
        <begin position="148"/>
        <end position="168"/>
    </location>
</feature>
<feature type="transmembrane region" description="Helical" evidence="1">
    <location>
        <begin position="184"/>
        <end position="204"/>
    </location>
</feature>
<feature type="transmembrane region" description="Helical" evidence="1">
    <location>
        <begin position="222"/>
        <end position="242"/>
    </location>
</feature>
<feature type="transmembrane region" description="Helical" evidence="1">
    <location>
        <begin position="307"/>
        <end position="327"/>
    </location>
</feature>
<feature type="transmembrane region" description="Helical" evidence="1">
    <location>
        <begin position="355"/>
        <end position="375"/>
    </location>
</feature>
<protein>
    <recommendedName>
        <fullName evidence="1">C4-dicarboxylate transport protein</fullName>
    </recommendedName>
</protein>
<name>DCTA_BURPS</name>
<dbReference type="EMBL" id="BX571965">
    <property type="protein sequence ID" value="CAH34413.1"/>
    <property type="molecule type" value="Genomic_DNA"/>
</dbReference>
<dbReference type="RefSeq" id="WP_004526010.1">
    <property type="nucleotide sequence ID" value="NZ_CP009538.1"/>
</dbReference>
<dbReference type="RefSeq" id="YP_107050.1">
    <property type="nucleotide sequence ID" value="NC_006350.1"/>
</dbReference>
<dbReference type="SMR" id="Q63XW5"/>
<dbReference type="STRING" id="272560.BPSL0425"/>
<dbReference type="KEGG" id="bps:BPSL0425"/>
<dbReference type="PATRIC" id="fig|272560.51.peg.1236"/>
<dbReference type="eggNOG" id="COG1301">
    <property type="taxonomic scope" value="Bacteria"/>
</dbReference>
<dbReference type="Proteomes" id="UP000000605">
    <property type="component" value="Chromosome 1"/>
</dbReference>
<dbReference type="GO" id="GO:0005886">
    <property type="term" value="C:plasma membrane"/>
    <property type="evidence" value="ECO:0007669"/>
    <property type="project" value="UniProtKB-SubCell"/>
</dbReference>
<dbReference type="GO" id="GO:0015138">
    <property type="term" value="F:fumarate transmembrane transporter activity"/>
    <property type="evidence" value="ECO:0007669"/>
    <property type="project" value="TreeGrafter"/>
</dbReference>
<dbReference type="GO" id="GO:0015366">
    <property type="term" value="F:malate:proton symporter activity"/>
    <property type="evidence" value="ECO:0007669"/>
    <property type="project" value="TreeGrafter"/>
</dbReference>
<dbReference type="GO" id="GO:0015141">
    <property type="term" value="F:succinate transmembrane transporter activity"/>
    <property type="evidence" value="ECO:0007669"/>
    <property type="project" value="TreeGrafter"/>
</dbReference>
<dbReference type="GO" id="GO:0070778">
    <property type="term" value="P:L-aspartate transmembrane transport"/>
    <property type="evidence" value="ECO:0007669"/>
    <property type="project" value="TreeGrafter"/>
</dbReference>
<dbReference type="FunFam" id="1.10.3860.10:FF:000001">
    <property type="entry name" value="C4-dicarboxylate transport protein"/>
    <property type="match status" value="1"/>
</dbReference>
<dbReference type="Gene3D" id="1.10.3860.10">
    <property type="entry name" value="Sodium:dicarboxylate symporter"/>
    <property type="match status" value="1"/>
</dbReference>
<dbReference type="HAMAP" id="MF_01300">
    <property type="entry name" value="C4_dicarb_transport"/>
    <property type="match status" value="1"/>
</dbReference>
<dbReference type="InterPro" id="IPR023954">
    <property type="entry name" value="C4_dicarb_transport"/>
</dbReference>
<dbReference type="InterPro" id="IPR001991">
    <property type="entry name" value="Na-dicarboxylate_symporter"/>
</dbReference>
<dbReference type="InterPro" id="IPR018107">
    <property type="entry name" value="Na-dicarboxylate_symporter_CS"/>
</dbReference>
<dbReference type="InterPro" id="IPR036458">
    <property type="entry name" value="Na:dicarbo_symporter_sf"/>
</dbReference>
<dbReference type="NCBIfam" id="NF002461">
    <property type="entry name" value="PRK01663.1"/>
    <property type="match status" value="1"/>
</dbReference>
<dbReference type="NCBIfam" id="NF009587">
    <property type="entry name" value="PRK13027.1"/>
    <property type="match status" value="1"/>
</dbReference>
<dbReference type="PANTHER" id="PTHR42865:SF1">
    <property type="entry name" value="AEROBIC C4-DICARBOXYLATE TRANSPORT PROTEIN"/>
    <property type="match status" value="1"/>
</dbReference>
<dbReference type="PANTHER" id="PTHR42865">
    <property type="entry name" value="PROTON/GLUTAMATE-ASPARTATE SYMPORTER"/>
    <property type="match status" value="1"/>
</dbReference>
<dbReference type="Pfam" id="PF00375">
    <property type="entry name" value="SDF"/>
    <property type="match status" value="1"/>
</dbReference>
<dbReference type="PRINTS" id="PR00173">
    <property type="entry name" value="EDTRNSPORT"/>
</dbReference>
<dbReference type="SUPFAM" id="SSF118215">
    <property type="entry name" value="Proton glutamate symport protein"/>
    <property type="match status" value="1"/>
</dbReference>
<dbReference type="PROSITE" id="PS00713">
    <property type="entry name" value="NA_DICARBOXYL_SYMP_1"/>
    <property type="match status" value="1"/>
</dbReference>
<dbReference type="PROSITE" id="PS00714">
    <property type="entry name" value="NA_DICARBOXYL_SYMP_2"/>
    <property type="match status" value="1"/>
</dbReference>
<keyword id="KW-0997">Cell inner membrane</keyword>
<keyword id="KW-1003">Cell membrane</keyword>
<keyword id="KW-0472">Membrane</keyword>
<keyword id="KW-1185">Reference proteome</keyword>
<keyword id="KW-0769">Symport</keyword>
<keyword id="KW-0812">Transmembrane</keyword>
<keyword id="KW-1133">Transmembrane helix</keyword>
<keyword id="KW-0813">Transport</keyword>